<dbReference type="EMBL" id="CP000233">
    <property type="protein sequence ID" value="ABD99385.1"/>
    <property type="molecule type" value="Genomic_DNA"/>
</dbReference>
<dbReference type="RefSeq" id="WP_003703155.1">
    <property type="nucleotide sequence ID" value="NC_007929.1"/>
</dbReference>
<dbReference type="RefSeq" id="YP_535468.1">
    <property type="nucleotide sequence ID" value="NC_007929.1"/>
</dbReference>
<dbReference type="SMR" id="Q1WUF0"/>
<dbReference type="STRING" id="362948.LSL_0576"/>
<dbReference type="KEGG" id="lsl:LSL_0576"/>
<dbReference type="PATRIC" id="fig|362948.14.peg.655"/>
<dbReference type="HOGENOM" id="CLU_050019_1_0_9"/>
<dbReference type="OrthoDB" id="9783139at2"/>
<dbReference type="Proteomes" id="UP000006559">
    <property type="component" value="Chromosome"/>
</dbReference>
<dbReference type="GO" id="GO:0003677">
    <property type="term" value="F:DNA binding"/>
    <property type="evidence" value="ECO:0007669"/>
    <property type="project" value="InterPro"/>
</dbReference>
<dbReference type="GO" id="GO:0045892">
    <property type="term" value="P:negative regulation of DNA-templated transcription"/>
    <property type="evidence" value="ECO:0007669"/>
    <property type="project" value="UniProtKB-UniRule"/>
</dbReference>
<dbReference type="Gene3D" id="3.30.450.40">
    <property type="match status" value="1"/>
</dbReference>
<dbReference type="Gene3D" id="3.30.390.60">
    <property type="entry name" value="Heat-inducible transcription repressor hrca homolog, domain 3"/>
    <property type="match status" value="1"/>
</dbReference>
<dbReference type="Gene3D" id="1.10.10.10">
    <property type="entry name" value="Winged helix-like DNA-binding domain superfamily/Winged helix DNA-binding domain"/>
    <property type="match status" value="1"/>
</dbReference>
<dbReference type="HAMAP" id="MF_00081">
    <property type="entry name" value="HrcA"/>
    <property type="match status" value="1"/>
</dbReference>
<dbReference type="InterPro" id="IPR029016">
    <property type="entry name" value="GAF-like_dom_sf"/>
</dbReference>
<dbReference type="InterPro" id="IPR002571">
    <property type="entry name" value="HrcA"/>
</dbReference>
<dbReference type="InterPro" id="IPR021153">
    <property type="entry name" value="HrcA_C"/>
</dbReference>
<dbReference type="InterPro" id="IPR036388">
    <property type="entry name" value="WH-like_DNA-bd_sf"/>
</dbReference>
<dbReference type="InterPro" id="IPR036390">
    <property type="entry name" value="WH_DNA-bd_sf"/>
</dbReference>
<dbReference type="InterPro" id="IPR023120">
    <property type="entry name" value="WHTH_transcript_rep_HrcA_IDD"/>
</dbReference>
<dbReference type="NCBIfam" id="TIGR00331">
    <property type="entry name" value="hrcA"/>
    <property type="match status" value="1"/>
</dbReference>
<dbReference type="PANTHER" id="PTHR34824">
    <property type="entry name" value="HEAT-INDUCIBLE TRANSCRIPTION REPRESSOR HRCA"/>
    <property type="match status" value="1"/>
</dbReference>
<dbReference type="PANTHER" id="PTHR34824:SF1">
    <property type="entry name" value="HEAT-INDUCIBLE TRANSCRIPTION REPRESSOR HRCA"/>
    <property type="match status" value="1"/>
</dbReference>
<dbReference type="Pfam" id="PF01628">
    <property type="entry name" value="HrcA"/>
    <property type="match status" value="1"/>
</dbReference>
<dbReference type="PIRSF" id="PIRSF005485">
    <property type="entry name" value="HrcA"/>
    <property type="match status" value="1"/>
</dbReference>
<dbReference type="SUPFAM" id="SSF55781">
    <property type="entry name" value="GAF domain-like"/>
    <property type="match status" value="1"/>
</dbReference>
<dbReference type="SUPFAM" id="SSF46785">
    <property type="entry name" value="Winged helix' DNA-binding domain"/>
    <property type="match status" value="1"/>
</dbReference>
<keyword id="KW-1185">Reference proteome</keyword>
<keyword id="KW-0678">Repressor</keyword>
<keyword id="KW-0346">Stress response</keyword>
<keyword id="KW-0804">Transcription</keyword>
<keyword id="KW-0805">Transcription regulation</keyword>
<comment type="function">
    <text evidence="1">Negative regulator of class I heat shock genes (grpE-dnaK-dnaJ and groELS operons). Prevents heat-shock induction of these operons.</text>
</comment>
<comment type="similarity">
    <text evidence="1">Belongs to the HrcA family.</text>
</comment>
<organism>
    <name type="scientific">Ligilactobacillus salivarius (strain UCC118)</name>
    <name type="common">Lactobacillus salivarius</name>
    <dbReference type="NCBI Taxonomy" id="362948"/>
    <lineage>
        <taxon>Bacteria</taxon>
        <taxon>Bacillati</taxon>
        <taxon>Bacillota</taxon>
        <taxon>Bacilli</taxon>
        <taxon>Lactobacillales</taxon>
        <taxon>Lactobacillaceae</taxon>
        <taxon>Ligilactobacillus</taxon>
    </lineage>
</organism>
<protein>
    <recommendedName>
        <fullName evidence="1">Heat-inducible transcription repressor HrcA</fullName>
    </recommendedName>
</protein>
<name>HRCA_LIGS1</name>
<accession>Q1WUF0</accession>
<evidence type="ECO:0000255" key="1">
    <source>
        <dbReference type="HAMAP-Rule" id="MF_00081"/>
    </source>
</evidence>
<gene>
    <name evidence="1" type="primary">hrcA</name>
    <name type="ordered locus">LSL_0576</name>
</gene>
<feature type="chain" id="PRO_1000010415" description="Heat-inducible transcription repressor HrcA">
    <location>
        <begin position="1"/>
        <end position="350"/>
    </location>
</feature>
<proteinExistence type="inferred from homology"/>
<sequence length="350" mass="39173">MLTERQLLILETIIRDYTDLGQPIGSKTLQEQLPIRVSSATIRNEMAVLEKQGFITKEHSSSGRIPSLKGYRYYVDNLVKPVKIDSKSVRSIQSLFGNEYRRVDEIIEMSAKILSDLTNYTAITLRPEASDLKLEGFRMVPLGNGQVMVILVASDGSVESQIYNLPNNIDGESLEAVIRLINDKLVGSSLSEVTSKLQELQPLLTKYIEKSDGFIDVFGGILDKAIKEQFYIGGRRNLLNFANGNNLEQIKSLYSLIDDESDKIGGLVDNTTNPHDHHGISVKIGDEMSDRLLLDYSLVSATYNVGSHGRGMIAILGPTNMPYSKMIGLVEVFQKELTKKLIDYYRNFDK</sequence>
<reference key="1">
    <citation type="journal article" date="2006" name="Proc. Natl. Acad. Sci. U.S.A.">
        <title>Multireplicon genome architecture of Lactobacillus salivarius.</title>
        <authorList>
            <person name="Claesson M.J."/>
            <person name="Li Y."/>
            <person name="Leahy S."/>
            <person name="Canchaya C."/>
            <person name="van Pijkeren J.P."/>
            <person name="Cerdeno-Tarraga A.M."/>
            <person name="Parkhill J."/>
            <person name="Flynn S."/>
            <person name="O'Sullivan G.C."/>
            <person name="Collins J.K."/>
            <person name="Higgins D."/>
            <person name="Shanahan F."/>
            <person name="Fitzgerald G.F."/>
            <person name="van Sinderen D."/>
            <person name="O'Toole P.W."/>
        </authorList>
    </citation>
    <scope>NUCLEOTIDE SEQUENCE [LARGE SCALE GENOMIC DNA]</scope>
    <source>
        <strain>UCC118</strain>
    </source>
</reference>